<reference key="1">
    <citation type="journal article" date="2002" name="Proc. Natl. Acad. Sci. U.S.A.">
        <title>The genome sequence of Bifidobacterium longum reflects its adaptation to the human gastrointestinal tract.</title>
        <authorList>
            <person name="Schell M.A."/>
            <person name="Karmirantzou M."/>
            <person name="Snel B."/>
            <person name="Vilanova D."/>
            <person name="Berger B."/>
            <person name="Pessi G."/>
            <person name="Zwahlen M.-C."/>
            <person name="Desiere F."/>
            <person name="Bork P."/>
            <person name="Delley M."/>
            <person name="Pridmore R.D."/>
            <person name="Arigoni F."/>
        </authorList>
    </citation>
    <scope>NUCLEOTIDE SEQUENCE [LARGE SCALE GENOMIC DNA]</scope>
    <source>
        <strain>NCC 2705</strain>
    </source>
</reference>
<dbReference type="EMBL" id="AE014295">
    <property type="protein sequence ID" value="AAN25370.1"/>
    <property type="molecule type" value="Genomic_DNA"/>
</dbReference>
<dbReference type="RefSeq" id="NP_696734.1">
    <property type="nucleotide sequence ID" value="NC_004307.2"/>
</dbReference>
<dbReference type="RefSeq" id="WP_007053032.1">
    <property type="nucleotide sequence ID" value="NC_004307.2"/>
</dbReference>
<dbReference type="SMR" id="Q8G416"/>
<dbReference type="STRING" id="206672.BL1579"/>
<dbReference type="EnsemblBacteria" id="AAN25370">
    <property type="protein sequence ID" value="AAN25370"/>
    <property type="gene ID" value="BL1579"/>
</dbReference>
<dbReference type="GeneID" id="69578896"/>
<dbReference type="KEGG" id="blo:BL1579"/>
<dbReference type="PATRIC" id="fig|206672.9.peg.1636"/>
<dbReference type="HOGENOM" id="CLU_041575_5_0_11"/>
<dbReference type="OrthoDB" id="9803201at2"/>
<dbReference type="PhylomeDB" id="Q8G416"/>
<dbReference type="Proteomes" id="UP000000439">
    <property type="component" value="Chromosome"/>
</dbReference>
<dbReference type="GO" id="GO:1990904">
    <property type="term" value="C:ribonucleoprotein complex"/>
    <property type="evidence" value="ECO:0007669"/>
    <property type="project" value="UniProtKB-KW"/>
</dbReference>
<dbReference type="GO" id="GO:0005840">
    <property type="term" value="C:ribosome"/>
    <property type="evidence" value="ECO:0007669"/>
    <property type="project" value="UniProtKB-KW"/>
</dbReference>
<dbReference type="GO" id="GO:0019843">
    <property type="term" value="F:rRNA binding"/>
    <property type="evidence" value="ECO:0007669"/>
    <property type="project" value="UniProtKB-UniRule"/>
</dbReference>
<dbReference type="GO" id="GO:0003735">
    <property type="term" value="F:structural constituent of ribosome"/>
    <property type="evidence" value="ECO:0007669"/>
    <property type="project" value="InterPro"/>
</dbReference>
<dbReference type="GO" id="GO:0006412">
    <property type="term" value="P:translation"/>
    <property type="evidence" value="ECO:0007669"/>
    <property type="project" value="UniProtKB-UniRule"/>
</dbReference>
<dbReference type="FunFam" id="3.40.1370.10:FF:000004">
    <property type="entry name" value="50S ribosomal protein L4"/>
    <property type="match status" value="1"/>
</dbReference>
<dbReference type="Gene3D" id="3.40.1370.10">
    <property type="match status" value="1"/>
</dbReference>
<dbReference type="HAMAP" id="MF_01328_B">
    <property type="entry name" value="Ribosomal_uL4_B"/>
    <property type="match status" value="1"/>
</dbReference>
<dbReference type="InterPro" id="IPR002136">
    <property type="entry name" value="Ribosomal_uL4"/>
</dbReference>
<dbReference type="InterPro" id="IPR013005">
    <property type="entry name" value="Ribosomal_uL4-like"/>
</dbReference>
<dbReference type="InterPro" id="IPR023574">
    <property type="entry name" value="Ribosomal_uL4_dom_sf"/>
</dbReference>
<dbReference type="NCBIfam" id="TIGR03953">
    <property type="entry name" value="rplD_bact"/>
    <property type="match status" value="1"/>
</dbReference>
<dbReference type="PANTHER" id="PTHR10746">
    <property type="entry name" value="50S RIBOSOMAL PROTEIN L4"/>
    <property type="match status" value="1"/>
</dbReference>
<dbReference type="PANTHER" id="PTHR10746:SF6">
    <property type="entry name" value="LARGE RIBOSOMAL SUBUNIT PROTEIN UL4M"/>
    <property type="match status" value="1"/>
</dbReference>
<dbReference type="Pfam" id="PF00573">
    <property type="entry name" value="Ribosomal_L4"/>
    <property type="match status" value="1"/>
</dbReference>
<dbReference type="SUPFAM" id="SSF52166">
    <property type="entry name" value="Ribosomal protein L4"/>
    <property type="match status" value="1"/>
</dbReference>
<protein>
    <recommendedName>
        <fullName evidence="1">Large ribosomal subunit protein uL4</fullName>
    </recommendedName>
    <alternativeName>
        <fullName evidence="3">50S ribosomal protein L4</fullName>
    </alternativeName>
</protein>
<feature type="chain" id="PRO_0000129186" description="Large ribosomal subunit protein uL4">
    <location>
        <begin position="1"/>
        <end position="218"/>
    </location>
</feature>
<feature type="region of interest" description="Disordered" evidence="2">
    <location>
        <begin position="55"/>
        <end position="83"/>
    </location>
</feature>
<organism>
    <name type="scientific">Bifidobacterium longum (strain NCC 2705)</name>
    <dbReference type="NCBI Taxonomy" id="206672"/>
    <lineage>
        <taxon>Bacteria</taxon>
        <taxon>Bacillati</taxon>
        <taxon>Actinomycetota</taxon>
        <taxon>Actinomycetes</taxon>
        <taxon>Bifidobacteriales</taxon>
        <taxon>Bifidobacteriaceae</taxon>
        <taxon>Bifidobacterium</taxon>
    </lineage>
</organism>
<proteinExistence type="inferred from homology"/>
<keyword id="KW-1185">Reference proteome</keyword>
<keyword id="KW-0687">Ribonucleoprotein</keyword>
<keyword id="KW-0689">Ribosomal protein</keyword>
<keyword id="KW-0694">RNA-binding</keyword>
<keyword id="KW-0699">rRNA-binding</keyword>
<gene>
    <name evidence="1" type="primary">rplD</name>
    <name type="ordered locus">BL1579</name>
</gene>
<sequence length="218" mass="23505">MANVTLNVTDAKGQATGTVEAPEALFGVSAEDVQAHIPLIHQVVTAQLAAARQGTHATKTRGMVSGGGKKPWKQKGTGRARQGSIRAPQWYHGGTVFGPQPRDYSQRTPKKMKAAALRYALSDRANAGRVAVVEFGITEPSTKAAVAALAPITADKFTTVVFTRDNINEWLSVRNIPTVHPIFVDQLNTYDVITSQYVVFTKEAFEAFVAAKTEPKEA</sequence>
<evidence type="ECO:0000255" key="1">
    <source>
        <dbReference type="HAMAP-Rule" id="MF_01328"/>
    </source>
</evidence>
<evidence type="ECO:0000256" key="2">
    <source>
        <dbReference type="SAM" id="MobiDB-lite"/>
    </source>
</evidence>
<evidence type="ECO:0000305" key="3"/>
<accession>Q8G416</accession>
<comment type="function">
    <text evidence="1">One of the primary rRNA binding proteins, this protein initially binds near the 5'-end of the 23S rRNA. It is important during the early stages of 50S assembly. It makes multiple contacts with different domains of the 23S rRNA in the assembled 50S subunit and ribosome.</text>
</comment>
<comment type="function">
    <text evidence="1">Forms part of the polypeptide exit tunnel.</text>
</comment>
<comment type="subunit">
    <text evidence="1">Part of the 50S ribosomal subunit.</text>
</comment>
<comment type="similarity">
    <text evidence="1">Belongs to the universal ribosomal protein uL4 family.</text>
</comment>
<name>RL4_BIFLO</name>